<protein>
    <recommendedName>
        <fullName evidence="1">Probable malate:quinone oxidoreductase</fullName>
        <ecNumber evidence="1">1.1.5.4</ecNumber>
    </recommendedName>
    <alternativeName>
        <fullName evidence="1">MQO</fullName>
    </alternativeName>
    <alternativeName>
        <fullName evidence="1">Malate dehydrogenase [quinone]</fullName>
    </alternativeName>
</protein>
<reference key="1">
    <citation type="journal article" date="2009" name="PLoS Genet.">
        <title>Organised genome dynamics in the Escherichia coli species results in highly diverse adaptive paths.</title>
        <authorList>
            <person name="Touchon M."/>
            <person name="Hoede C."/>
            <person name="Tenaillon O."/>
            <person name="Barbe V."/>
            <person name="Baeriswyl S."/>
            <person name="Bidet P."/>
            <person name="Bingen E."/>
            <person name="Bonacorsi S."/>
            <person name="Bouchier C."/>
            <person name="Bouvet O."/>
            <person name="Calteau A."/>
            <person name="Chiapello H."/>
            <person name="Clermont O."/>
            <person name="Cruveiller S."/>
            <person name="Danchin A."/>
            <person name="Diard M."/>
            <person name="Dossat C."/>
            <person name="Karoui M.E."/>
            <person name="Frapy E."/>
            <person name="Garry L."/>
            <person name="Ghigo J.M."/>
            <person name="Gilles A.M."/>
            <person name="Johnson J."/>
            <person name="Le Bouguenec C."/>
            <person name="Lescat M."/>
            <person name="Mangenot S."/>
            <person name="Martinez-Jehanne V."/>
            <person name="Matic I."/>
            <person name="Nassif X."/>
            <person name="Oztas S."/>
            <person name="Petit M.A."/>
            <person name="Pichon C."/>
            <person name="Rouy Z."/>
            <person name="Ruf C.S."/>
            <person name="Schneider D."/>
            <person name="Tourret J."/>
            <person name="Vacherie B."/>
            <person name="Vallenet D."/>
            <person name="Medigue C."/>
            <person name="Rocha E.P.C."/>
            <person name="Denamur E."/>
        </authorList>
    </citation>
    <scope>NUCLEOTIDE SEQUENCE [LARGE SCALE GENOMIC DNA]</scope>
    <source>
        <strain>IAI39 / ExPEC</strain>
    </source>
</reference>
<sequence length="548" mass="60244">MKKVTAMLFSMAVGLNAVSMAAKAKASEEQETDVLLIGGGIMSATLGTYLRELEPEWSMTMVERLEGVAQESSNGWNNAGTGHSALMELNYTPQNADGSISIEKAVAINEAFQISRQFWAHQVERGVLRTPRSFINTVPHMSFVWGEDNVNFLRARYAALQQSSLFRGMRYSEDHAQIKEWAPLVMEGRDPQQKVAATRTEIGTDVNYGEITRQLIASLQKKSNFSLQLSSEVRALKRNDDNTWTVTVADLKNGTAQNIRAKFVFIGAGGAALKLLQESGIPEAKDYAGFPVGGQFLVSENPDVVNHHLAKVYGKASVGAPPMSVPHIDTRVLDGKRVVLFGPFATFSTKFLKNGSLWDLMSSTTTSNVMPMMHVGLDNFDLVKYLVSQVMLSEEDRFEALKEYYPQAKKEDWRLWQAGQRVQIIKRDAEKGGVLRLGTEVVSDQQGTIAALLGASPGASTAAPIMLNLLEKVFGDRVSSPQWQATLKAIVPSYGRKLNGDVAATERELQYTSEVLGLKYDKPQAADSTPKPQLKPQPVQKEVADIAL</sequence>
<comment type="catalytic activity">
    <reaction evidence="1">
        <text>(S)-malate + a quinone = a quinol + oxaloacetate</text>
        <dbReference type="Rhea" id="RHEA:46012"/>
        <dbReference type="ChEBI" id="CHEBI:15589"/>
        <dbReference type="ChEBI" id="CHEBI:16452"/>
        <dbReference type="ChEBI" id="CHEBI:24646"/>
        <dbReference type="ChEBI" id="CHEBI:132124"/>
        <dbReference type="EC" id="1.1.5.4"/>
    </reaction>
</comment>
<comment type="cofactor">
    <cofactor evidence="1">
        <name>FAD</name>
        <dbReference type="ChEBI" id="CHEBI:57692"/>
    </cofactor>
</comment>
<comment type="pathway">
    <text evidence="1">Carbohydrate metabolism; tricarboxylic acid cycle; oxaloacetate from (S)-malate (quinone route): step 1/1.</text>
</comment>
<comment type="similarity">
    <text evidence="1">Belongs to the MQO family.</text>
</comment>
<feature type="chain" id="PRO_1000191315" description="Probable malate:quinone oxidoreductase">
    <location>
        <begin position="1"/>
        <end position="548"/>
    </location>
</feature>
<feature type="region of interest" description="Disordered" evidence="2">
    <location>
        <begin position="521"/>
        <end position="548"/>
    </location>
</feature>
<feature type="compositionally biased region" description="Low complexity" evidence="2">
    <location>
        <begin position="530"/>
        <end position="541"/>
    </location>
</feature>
<name>MQO_ECO7I</name>
<organism>
    <name type="scientific">Escherichia coli O7:K1 (strain IAI39 / ExPEC)</name>
    <dbReference type="NCBI Taxonomy" id="585057"/>
    <lineage>
        <taxon>Bacteria</taxon>
        <taxon>Pseudomonadati</taxon>
        <taxon>Pseudomonadota</taxon>
        <taxon>Gammaproteobacteria</taxon>
        <taxon>Enterobacterales</taxon>
        <taxon>Enterobacteriaceae</taxon>
        <taxon>Escherichia</taxon>
    </lineage>
</organism>
<dbReference type="EC" id="1.1.5.4" evidence="1"/>
<dbReference type="EMBL" id="CU928164">
    <property type="protein sequence ID" value="CAR18473.1"/>
    <property type="molecule type" value="Genomic_DNA"/>
</dbReference>
<dbReference type="RefSeq" id="WP_000758076.1">
    <property type="nucleotide sequence ID" value="NC_011750.1"/>
</dbReference>
<dbReference type="RefSeq" id="YP_002408307.1">
    <property type="nucleotide sequence ID" value="NC_011750.1"/>
</dbReference>
<dbReference type="SMR" id="B7NN21"/>
<dbReference type="STRING" id="585057.ECIAI39_2347"/>
<dbReference type="GeneID" id="75172338"/>
<dbReference type="KEGG" id="ect:ECIAI39_2347"/>
<dbReference type="PATRIC" id="fig|585057.6.peg.2447"/>
<dbReference type="HOGENOM" id="CLU_028151_0_0_6"/>
<dbReference type="UniPathway" id="UPA00223">
    <property type="reaction ID" value="UER01008"/>
</dbReference>
<dbReference type="Proteomes" id="UP000000749">
    <property type="component" value="Chromosome"/>
</dbReference>
<dbReference type="GO" id="GO:0047545">
    <property type="term" value="F:2-hydroxyglutarate dehydrogenase activity"/>
    <property type="evidence" value="ECO:0007669"/>
    <property type="project" value="TreeGrafter"/>
</dbReference>
<dbReference type="GO" id="GO:0008924">
    <property type="term" value="F:L-malate dehydrogenase (quinone) activity"/>
    <property type="evidence" value="ECO:0007669"/>
    <property type="project" value="UniProtKB-UniRule"/>
</dbReference>
<dbReference type="GO" id="GO:0006099">
    <property type="term" value="P:tricarboxylic acid cycle"/>
    <property type="evidence" value="ECO:0007669"/>
    <property type="project" value="UniProtKB-UniRule"/>
</dbReference>
<dbReference type="Gene3D" id="3.30.9.10">
    <property type="entry name" value="D-Amino Acid Oxidase, subunit A, domain 2"/>
    <property type="match status" value="1"/>
</dbReference>
<dbReference type="Gene3D" id="3.50.50.60">
    <property type="entry name" value="FAD/NAD(P)-binding domain"/>
    <property type="match status" value="1"/>
</dbReference>
<dbReference type="HAMAP" id="MF_00212">
    <property type="entry name" value="MQO"/>
    <property type="match status" value="1"/>
</dbReference>
<dbReference type="InterPro" id="IPR036188">
    <property type="entry name" value="FAD/NAD-bd_sf"/>
</dbReference>
<dbReference type="InterPro" id="IPR006231">
    <property type="entry name" value="MQO"/>
</dbReference>
<dbReference type="NCBIfam" id="TIGR01320">
    <property type="entry name" value="mal_quin_oxido"/>
    <property type="match status" value="1"/>
</dbReference>
<dbReference type="NCBIfam" id="NF003603">
    <property type="entry name" value="PRK05257.1-1"/>
    <property type="match status" value="1"/>
</dbReference>
<dbReference type="NCBIfam" id="NF003605">
    <property type="entry name" value="PRK05257.1-4"/>
    <property type="match status" value="1"/>
</dbReference>
<dbReference type="NCBIfam" id="NF003606">
    <property type="entry name" value="PRK05257.2-1"/>
    <property type="match status" value="1"/>
</dbReference>
<dbReference type="NCBIfam" id="NF003608">
    <property type="entry name" value="PRK05257.2-4"/>
    <property type="match status" value="1"/>
</dbReference>
<dbReference type="NCBIfam" id="NF003611">
    <property type="entry name" value="PRK05257.3-2"/>
    <property type="match status" value="1"/>
</dbReference>
<dbReference type="NCBIfam" id="NF009875">
    <property type="entry name" value="PRK13339.1"/>
    <property type="match status" value="1"/>
</dbReference>
<dbReference type="PANTHER" id="PTHR43104">
    <property type="entry name" value="L-2-HYDROXYGLUTARATE DEHYDROGENASE, MITOCHONDRIAL"/>
    <property type="match status" value="1"/>
</dbReference>
<dbReference type="PANTHER" id="PTHR43104:SF2">
    <property type="entry name" value="L-2-HYDROXYGLUTARATE DEHYDROGENASE, MITOCHONDRIAL"/>
    <property type="match status" value="1"/>
</dbReference>
<dbReference type="Pfam" id="PF06039">
    <property type="entry name" value="Mqo"/>
    <property type="match status" value="1"/>
</dbReference>
<dbReference type="SUPFAM" id="SSF51905">
    <property type="entry name" value="FAD/NAD(P)-binding domain"/>
    <property type="match status" value="1"/>
</dbReference>
<keyword id="KW-0274">FAD</keyword>
<keyword id="KW-0285">Flavoprotein</keyword>
<keyword id="KW-0560">Oxidoreductase</keyword>
<keyword id="KW-0816">Tricarboxylic acid cycle</keyword>
<accession>B7NN21</accession>
<evidence type="ECO:0000255" key="1">
    <source>
        <dbReference type="HAMAP-Rule" id="MF_00212"/>
    </source>
</evidence>
<evidence type="ECO:0000256" key="2">
    <source>
        <dbReference type="SAM" id="MobiDB-lite"/>
    </source>
</evidence>
<gene>
    <name evidence="1" type="primary">mqo</name>
    <name type="ordered locus">ECIAI39_2347</name>
</gene>
<proteinExistence type="inferred from homology"/>